<evidence type="ECO:0000255" key="1">
    <source>
        <dbReference type="HAMAP-Rule" id="MF_01702"/>
    </source>
</evidence>
<reference key="1">
    <citation type="journal article" date="2006" name="Proc. Natl. Acad. Sci. U.S.A.">
        <title>Molecular genetic anatomy of inter- and intraserotype variation in the human bacterial pathogen group A Streptococcus.</title>
        <authorList>
            <person name="Beres S.B."/>
            <person name="Richter E.W."/>
            <person name="Nagiec M.J."/>
            <person name="Sumby P."/>
            <person name="Porcella S.F."/>
            <person name="DeLeo F.R."/>
            <person name="Musser J.M."/>
        </authorList>
    </citation>
    <scope>NUCLEOTIDE SEQUENCE [LARGE SCALE GENOMIC DNA]</scope>
    <source>
        <strain>MGAS10750</strain>
    </source>
</reference>
<gene>
    <name evidence="1" type="primary">pstB2</name>
    <name type="ordered locus">MGAS10750_Spy1102</name>
</gene>
<feature type="chain" id="PRO_0000272550" description="Phosphate import ATP-binding protein PstB 2">
    <location>
        <begin position="1"/>
        <end position="267"/>
    </location>
</feature>
<feature type="domain" description="ABC transporter" evidence="1">
    <location>
        <begin position="21"/>
        <end position="262"/>
    </location>
</feature>
<feature type="binding site" evidence="1">
    <location>
        <begin position="53"/>
        <end position="60"/>
    </location>
    <ligand>
        <name>ATP</name>
        <dbReference type="ChEBI" id="CHEBI:30616"/>
    </ligand>
</feature>
<keyword id="KW-0067">ATP-binding</keyword>
<keyword id="KW-1003">Cell membrane</keyword>
<keyword id="KW-0472">Membrane</keyword>
<keyword id="KW-0547">Nucleotide-binding</keyword>
<keyword id="KW-0592">Phosphate transport</keyword>
<keyword id="KW-1278">Translocase</keyword>
<keyword id="KW-0813">Transport</keyword>
<proteinExistence type="inferred from homology"/>
<comment type="function">
    <text evidence="1">Part of the ABC transporter complex PstSACB involved in phosphate import. Responsible for energy coupling to the transport system.</text>
</comment>
<comment type="catalytic activity">
    <reaction evidence="1">
        <text>phosphate(out) + ATP + H2O = ADP + 2 phosphate(in) + H(+)</text>
        <dbReference type="Rhea" id="RHEA:24440"/>
        <dbReference type="ChEBI" id="CHEBI:15377"/>
        <dbReference type="ChEBI" id="CHEBI:15378"/>
        <dbReference type="ChEBI" id="CHEBI:30616"/>
        <dbReference type="ChEBI" id="CHEBI:43474"/>
        <dbReference type="ChEBI" id="CHEBI:456216"/>
        <dbReference type="EC" id="7.3.2.1"/>
    </reaction>
</comment>
<comment type="subunit">
    <text evidence="1">The complex is composed of two ATP-binding proteins (PstB), two transmembrane proteins (PstC and PstA) and a solute-binding protein (PstS).</text>
</comment>
<comment type="subcellular location">
    <subcellularLocation>
        <location evidence="1">Cell membrane</location>
        <topology evidence="1">Peripheral membrane protein</topology>
    </subcellularLocation>
</comment>
<comment type="similarity">
    <text evidence="1">Belongs to the ABC transporter superfamily. Phosphate importer (TC 3.A.1.7) family.</text>
</comment>
<organism>
    <name type="scientific">Streptococcus pyogenes serotype M4 (strain MGAS10750)</name>
    <dbReference type="NCBI Taxonomy" id="370554"/>
    <lineage>
        <taxon>Bacteria</taxon>
        <taxon>Bacillati</taxon>
        <taxon>Bacillota</taxon>
        <taxon>Bacilli</taxon>
        <taxon>Lactobacillales</taxon>
        <taxon>Streptococcaceae</taxon>
        <taxon>Streptococcus</taxon>
    </lineage>
</organism>
<accession>Q1J6D1</accession>
<sequence>MTEYNWNERHIITFPEETLALATKDLHVYYGAKEAIKGIDMQFEKHKITALIGPSGCGKSTYLRSLNRMNDTIDIARVTGEILYQGIDVNRKDMNVYEIRKHLGMVFQRPNPFAKSIYKNITFAHERAGVKDKKVLDEIVETSLKQAALWDQVKDDLHKSAFTLSGGQQQRLCIARAISVKPDILLMDEPASALDPIATMQLEETMFELKKNYTIIIVTHNMQQAARASDYTAFFYLGNLIEYDKTRNIFQNAQCQSTNDYVSGHFG</sequence>
<dbReference type="EC" id="7.3.2.1" evidence="1"/>
<dbReference type="EMBL" id="CP000262">
    <property type="protein sequence ID" value="ABF38052.1"/>
    <property type="molecule type" value="Genomic_DNA"/>
</dbReference>
<dbReference type="SMR" id="Q1J6D1"/>
<dbReference type="KEGG" id="spi:MGAS10750_Spy1102"/>
<dbReference type="HOGENOM" id="CLU_000604_1_22_9"/>
<dbReference type="Proteomes" id="UP000002434">
    <property type="component" value="Chromosome"/>
</dbReference>
<dbReference type="GO" id="GO:0005886">
    <property type="term" value="C:plasma membrane"/>
    <property type="evidence" value="ECO:0007669"/>
    <property type="project" value="UniProtKB-SubCell"/>
</dbReference>
<dbReference type="GO" id="GO:0005524">
    <property type="term" value="F:ATP binding"/>
    <property type="evidence" value="ECO:0007669"/>
    <property type="project" value="UniProtKB-KW"/>
</dbReference>
<dbReference type="GO" id="GO:0016887">
    <property type="term" value="F:ATP hydrolysis activity"/>
    <property type="evidence" value="ECO:0007669"/>
    <property type="project" value="InterPro"/>
</dbReference>
<dbReference type="GO" id="GO:0015415">
    <property type="term" value="F:ATPase-coupled phosphate ion transmembrane transporter activity"/>
    <property type="evidence" value="ECO:0007669"/>
    <property type="project" value="UniProtKB-EC"/>
</dbReference>
<dbReference type="GO" id="GO:0035435">
    <property type="term" value="P:phosphate ion transmembrane transport"/>
    <property type="evidence" value="ECO:0007669"/>
    <property type="project" value="InterPro"/>
</dbReference>
<dbReference type="CDD" id="cd03260">
    <property type="entry name" value="ABC_PstB_phosphate_transporter"/>
    <property type="match status" value="1"/>
</dbReference>
<dbReference type="Gene3D" id="3.40.50.300">
    <property type="entry name" value="P-loop containing nucleotide triphosphate hydrolases"/>
    <property type="match status" value="1"/>
</dbReference>
<dbReference type="InterPro" id="IPR003593">
    <property type="entry name" value="AAA+_ATPase"/>
</dbReference>
<dbReference type="InterPro" id="IPR003439">
    <property type="entry name" value="ABC_transporter-like_ATP-bd"/>
</dbReference>
<dbReference type="InterPro" id="IPR017871">
    <property type="entry name" value="ABC_transporter-like_CS"/>
</dbReference>
<dbReference type="InterPro" id="IPR027417">
    <property type="entry name" value="P-loop_NTPase"/>
</dbReference>
<dbReference type="InterPro" id="IPR005670">
    <property type="entry name" value="PstB-like"/>
</dbReference>
<dbReference type="NCBIfam" id="TIGR00972">
    <property type="entry name" value="3a0107s01c2"/>
    <property type="match status" value="1"/>
</dbReference>
<dbReference type="PANTHER" id="PTHR43423">
    <property type="entry name" value="ABC TRANSPORTER I FAMILY MEMBER 17"/>
    <property type="match status" value="1"/>
</dbReference>
<dbReference type="PANTHER" id="PTHR43423:SF10">
    <property type="entry name" value="PHOSPHATE IMPORT ATP-BINDING PROTEIN PSTB 2"/>
    <property type="match status" value="1"/>
</dbReference>
<dbReference type="Pfam" id="PF00005">
    <property type="entry name" value="ABC_tran"/>
    <property type="match status" value="1"/>
</dbReference>
<dbReference type="SMART" id="SM00382">
    <property type="entry name" value="AAA"/>
    <property type="match status" value="1"/>
</dbReference>
<dbReference type="SUPFAM" id="SSF52540">
    <property type="entry name" value="P-loop containing nucleoside triphosphate hydrolases"/>
    <property type="match status" value="1"/>
</dbReference>
<dbReference type="PROSITE" id="PS00211">
    <property type="entry name" value="ABC_TRANSPORTER_1"/>
    <property type="match status" value="1"/>
</dbReference>
<dbReference type="PROSITE" id="PS50893">
    <property type="entry name" value="ABC_TRANSPORTER_2"/>
    <property type="match status" value="1"/>
</dbReference>
<dbReference type="PROSITE" id="PS51238">
    <property type="entry name" value="PSTB"/>
    <property type="match status" value="1"/>
</dbReference>
<name>PSTB2_STRPF</name>
<protein>
    <recommendedName>
        <fullName evidence="1">Phosphate import ATP-binding protein PstB 2</fullName>
        <ecNumber evidence="1">7.3.2.1</ecNumber>
    </recommendedName>
    <alternativeName>
        <fullName evidence="1">ABC phosphate transporter 2</fullName>
    </alternativeName>
    <alternativeName>
        <fullName evidence="1">Phosphate-transporting ATPase 2</fullName>
    </alternativeName>
</protein>